<protein>
    <recommendedName>
        <fullName evidence="1">PF03932 family protein CutC</fullName>
    </recommendedName>
    <alternativeName>
        <fullName evidence="5">Putative copper homeostasis protein CutC</fullName>
    </alternativeName>
</protein>
<evidence type="ECO:0000255" key="1">
    <source>
        <dbReference type="HAMAP-Rule" id="MF_00795"/>
    </source>
</evidence>
<evidence type="ECO:0000269" key="2">
    <source>
    </source>
</evidence>
<evidence type="ECO:0000303" key="3">
    <source>
    </source>
</evidence>
<evidence type="ECO:0000305" key="4"/>
<evidence type="ECO:0000305" key="5">
    <source>
    </source>
</evidence>
<evidence type="ECO:0000312" key="6">
    <source>
        <dbReference type="EMBL" id="AAO82374.1"/>
    </source>
</evidence>
<keyword id="KW-0963">Cytoplasm</keyword>
<keyword id="KW-1185">Reference proteome</keyword>
<comment type="function">
    <text evidence="5">Might participate in the control of copper homeostasis; data from other bacteria suggests it is not involved.</text>
</comment>
<comment type="subcellular location">
    <subcellularLocation>
        <location evidence="1">Cytoplasm</location>
    </subcellularLocation>
</comment>
<comment type="induction">
    <text evidence="2">Induced late during copper exposure.</text>
</comment>
<comment type="disruption phenotype">
    <text evidence="2">Mutant shows a significant increase in the intracellular copper concentration after 90 and 135 minutes of exposure to copper.</text>
</comment>
<comment type="similarity">
    <text evidence="1 4">Belongs to the CutC family.</text>
</comment>
<comment type="caution">
    <text evidence="1">Once thought to be involved in copper homeostasis, experiments in E.coli have shown this is not the case.</text>
</comment>
<gene>
    <name evidence="1 3" type="primary">cutC</name>
    <name evidence="6" type="ordered locus">EF_2667</name>
</gene>
<feature type="chain" id="PRO_0000442179" description="PF03932 family protein CutC">
    <location>
        <begin position="1"/>
        <end position="209"/>
    </location>
</feature>
<name>CUTC_ENTFA</name>
<accession>Q830V2</accession>
<dbReference type="EMBL" id="AE016830">
    <property type="protein sequence ID" value="AAO82374.1"/>
    <property type="molecule type" value="Genomic_DNA"/>
</dbReference>
<dbReference type="RefSeq" id="NP_816304.1">
    <property type="nucleotide sequence ID" value="NC_004668.1"/>
</dbReference>
<dbReference type="RefSeq" id="WP_002356490.1">
    <property type="nucleotide sequence ID" value="NZ_KE136528.1"/>
</dbReference>
<dbReference type="SMR" id="Q830V2"/>
<dbReference type="STRING" id="226185.EF_2667"/>
<dbReference type="EnsemblBacteria" id="AAO82374">
    <property type="protein sequence ID" value="AAO82374"/>
    <property type="gene ID" value="EF_2667"/>
</dbReference>
<dbReference type="KEGG" id="efa:EF2667"/>
<dbReference type="PATRIC" id="fig|226185.45.peg.894"/>
<dbReference type="eggNOG" id="COG3142">
    <property type="taxonomic scope" value="Bacteria"/>
</dbReference>
<dbReference type="HOGENOM" id="CLU_050555_2_0_9"/>
<dbReference type="Proteomes" id="UP000001415">
    <property type="component" value="Chromosome"/>
</dbReference>
<dbReference type="GO" id="GO:0005737">
    <property type="term" value="C:cytoplasm"/>
    <property type="evidence" value="ECO:0007669"/>
    <property type="project" value="UniProtKB-SubCell"/>
</dbReference>
<dbReference type="GO" id="GO:0005507">
    <property type="term" value="F:copper ion binding"/>
    <property type="evidence" value="ECO:0007669"/>
    <property type="project" value="TreeGrafter"/>
</dbReference>
<dbReference type="FunFam" id="3.20.20.380:FF:000003">
    <property type="entry name" value="Copper homeostasis protein CutC"/>
    <property type="match status" value="1"/>
</dbReference>
<dbReference type="Gene3D" id="3.20.20.380">
    <property type="entry name" value="Copper homeostasis (CutC) domain"/>
    <property type="match status" value="1"/>
</dbReference>
<dbReference type="HAMAP" id="MF_00795">
    <property type="entry name" value="CutC"/>
    <property type="match status" value="1"/>
</dbReference>
<dbReference type="InterPro" id="IPR005627">
    <property type="entry name" value="CutC-like"/>
</dbReference>
<dbReference type="InterPro" id="IPR036822">
    <property type="entry name" value="CutC-like_dom_sf"/>
</dbReference>
<dbReference type="PANTHER" id="PTHR12598">
    <property type="entry name" value="COPPER HOMEOSTASIS PROTEIN CUTC"/>
    <property type="match status" value="1"/>
</dbReference>
<dbReference type="PANTHER" id="PTHR12598:SF0">
    <property type="entry name" value="COPPER HOMEOSTASIS PROTEIN CUTC HOMOLOG"/>
    <property type="match status" value="1"/>
</dbReference>
<dbReference type="Pfam" id="PF03932">
    <property type="entry name" value="CutC"/>
    <property type="match status" value="1"/>
</dbReference>
<dbReference type="SUPFAM" id="SSF110395">
    <property type="entry name" value="CutC-like"/>
    <property type="match status" value="1"/>
</dbReference>
<sequence length="209" mass="22906">MIKEFCAENFTKIPQAIQKGANRIELCDNLAVGGTTPSTGVIEEVLAYAGEHSVPVMTIIRPRGGNFVYNDIELKIMHTDLIEAKKLGTDGIVIGCLTEDGWLDEEALDLFIETAEGLQITFHMAFDALSKENQFKAIDWLAERGVTRILTHGGPAGTPIEDNFDHLKELIVYADQRILILPGGGISTENVQTVMDTLKVTEVHGTKIV</sequence>
<organism>
    <name type="scientific">Enterococcus faecalis (strain ATCC 700802 / V583)</name>
    <dbReference type="NCBI Taxonomy" id="226185"/>
    <lineage>
        <taxon>Bacteria</taxon>
        <taxon>Bacillati</taxon>
        <taxon>Bacillota</taxon>
        <taxon>Bacilli</taxon>
        <taxon>Lactobacillales</taxon>
        <taxon>Enterococcaceae</taxon>
        <taxon>Enterococcus</taxon>
    </lineage>
</organism>
<reference key="1">
    <citation type="journal article" date="2003" name="Science">
        <title>Role of mobile DNA in the evolution of vancomycin-resistant Enterococcus faecalis.</title>
        <authorList>
            <person name="Paulsen I.T."/>
            <person name="Banerjei L."/>
            <person name="Myers G.S.A."/>
            <person name="Nelson K.E."/>
            <person name="Seshadri R."/>
            <person name="Read T.D."/>
            <person name="Fouts D.E."/>
            <person name="Eisen J.A."/>
            <person name="Gill S.R."/>
            <person name="Heidelberg J.F."/>
            <person name="Tettelin H."/>
            <person name="Dodson R.J."/>
            <person name="Umayam L.A."/>
            <person name="Brinkac L.M."/>
            <person name="Beanan M.J."/>
            <person name="Daugherty S.C."/>
            <person name="DeBoy R.T."/>
            <person name="Durkin S.A."/>
            <person name="Kolonay J.F."/>
            <person name="Madupu R."/>
            <person name="Nelson W.C."/>
            <person name="Vamathevan J.J."/>
            <person name="Tran B."/>
            <person name="Upton J."/>
            <person name="Hansen T."/>
            <person name="Shetty J."/>
            <person name="Khouri H.M."/>
            <person name="Utterback T.R."/>
            <person name="Radune D."/>
            <person name="Ketchum K.A."/>
            <person name="Dougherty B.A."/>
            <person name="Fraser C.M."/>
        </authorList>
    </citation>
    <scope>NUCLEOTIDE SEQUENCE [LARGE SCALE GENOMIC DNA]</scope>
    <source>
        <strain>ATCC 700802 / V583</strain>
    </source>
</reference>
<reference key="2">
    <citation type="journal article" date="2011" name="Biochem. Biophys. Res. Commun.">
        <title>CutC is induced late during copper exposure and can modify intracellular copper content in Enterococcus faecalis.</title>
        <authorList>
            <person name="Latorre M."/>
            <person name="Olivares F."/>
            <person name="Reyes-Jara A."/>
            <person name="Lopez G."/>
            <person name="Gonzalez M."/>
        </authorList>
    </citation>
    <scope>PUTATIVE FUNCTION</scope>
    <scope>INDUCTION</scope>
    <scope>DISRUPTION PHENOTYPE</scope>
    <source>
        <strain>ATCC 700802 / V583</strain>
    </source>
</reference>
<proteinExistence type="evidence at transcript level"/>